<feature type="chain" id="PRO_1000067537" description="Large ribosomal subunit protein uL2">
    <location>
        <begin position="1"/>
        <end position="275"/>
    </location>
</feature>
<feature type="region of interest" description="Disordered" evidence="2">
    <location>
        <begin position="216"/>
        <end position="275"/>
    </location>
</feature>
<feature type="compositionally biased region" description="Basic residues" evidence="2">
    <location>
        <begin position="257"/>
        <end position="275"/>
    </location>
</feature>
<evidence type="ECO:0000255" key="1">
    <source>
        <dbReference type="HAMAP-Rule" id="MF_01320"/>
    </source>
</evidence>
<evidence type="ECO:0000256" key="2">
    <source>
        <dbReference type="SAM" id="MobiDB-lite"/>
    </source>
</evidence>
<evidence type="ECO:0000305" key="3"/>
<organism>
    <name type="scientific">Aliarcobacter butzleri (strain RM4018)</name>
    <name type="common">Arcobacter butzleri</name>
    <dbReference type="NCBI Taxonomy" id="367737"/>
    <lineage>
        <taxon>Bacteria</taxon>
        <taxon>Pseudomonadati</taxon>
        <taxon>Campylobacterota</taxon>
        <taxon>Epsilonproteobacteria</taxon>
        <taxon>Campylobacterales</taxon>
        <taxon>Arcobacteraceae</taxon>
        <taxon>Aliarcobacter</taxon>
    </lineage>
</organism>
<proteinExistence type="inferred from homology"/>
<sequence length="275" mass="30142">MAIKKFRPITPARRFMSVMDTSDITSKPTVRSLLVKVKASAGRNNNGRITSRHKEAGAKKLYRIIDFKRNKFGIEGTVATVEYDPYRNCRICLVSYLDGDKRYIIQPSGLKVGDKVQAAESGLDILPGNAMQLSNIPVGTMVHNIELKPGKGAQIARAAGGYAQIMGREDKYVILRLPSGEMRKILGVCMATVGVVGNEDYTNMVVGKAGRSRHLGIRPQTRGSAMNPIDHPHGGGEGKTNSGRHPVTPWGMPTKGYKTRKKKASDKLIISKRKK</sequence>
<protein>
    <recommendedName>
        <fullName evidence="1">Large ribosomal subunit protein uL2</fullName>
    </recommendedName>
    <alternativeName>
        <fullName evidence="3">50S ribosomal protein L2</fullName>
    </alternativeName>
</protein>
<keyword id="KW-1185">Reference proteome</keyword>
<keyword id="KW-0687">Ribonucleoprotein</keyword>
<keyword id="KW-0689">Ribosomal protein</keyword>
<keyword id="KW-0694">RNA-binding</keyword>
<keyword id="KW-0699">rRNA-binding</keyword>
<name>RL2_ALIB4</name>
<gene>
    <name evidence="1" type="primary">rplB</name>
    <name type="ordered locus">Abu_0755</name>
</gene>
<accession>A8ESU6</accession>
<comment type="function">
    <text evidence="1">One of the primary rRNA binding proteins. Required for association of the 30S and 50S subunits to form the 70S ribosome, for tRNA binding and peptide bond formation. It has been suggested to have peptidyltransferase activity; this is somewhat controversial. Makes several contacts with the 16S rRNA in the 70S ribosome.</text>
</comment>
<comment type="subunit">
    <text evidence="1">Part of the 50S ribosomal subunit. Forms a bridge to the 30S subunit in the 70S ribosome.</text>
</comment>
<comment type="similarity">
    <text evidence="1">Belongs to the universal ribosomal protein uL2 family.</text>
</comment>
<dbReference type="EMBL" id="CP000361">
    <property type="protein sequence ID" value="ABV67020.1"/>
    <property type="molecule type" value="Genomic_DNA"/>
</dbReference>
<dbReference type="RefSeq" id="WP_004510823.1">
    <property type="nucleotide sequence ID" value="NC_009850.1"/>
</dbReference>
<dbReference type="SMR" id="A8ESU6"/>
<dbReference type="STRING" id="367737.Abu_0755"/>
<dbReference type="GeneID" id="24304483"/>
<dbReference type="KEGG" id="abu:Abu_0755"/>
<dbReference type="eggNOG" id="COG0090">
    <property type="taxonomic scope" value="Bacteria"/>
</dbReference>
<dbReference type="HOGENOM" id="CLU_036235_2_1_7"/>
<dbReference type="Proteomes" id="UP000001136">
    <property type="component" value="Chromosome"/>
</dbReference>
<dbReference type="GO" id="GO:0015934">
    <property type="term" value="C:large ribosomal subunit"/>
    <property type="evidence" value="ECO:0007669"/>
    <property type="project" value="InterPro"/>
</dbReference>
<dbReference type="GO" id="GO:0019843">
    <property type="term" value="F:rRNA binding"/>
    <property type="evidence" value="ECO:0007669"/>
    <property type="project" value="UniProtKB-UniRule"/>
</dbReference>
<dbReference type="GO" id="GO:0003735">
    <property type="term" value="F:structural constituent of ribosome"/>
    <property type="evidence" value="ECO:0007669"/>
    <property type="project" value="InterPro"/>
</dbReference>
<dbReference type="GO" id="GO:0016740">
    <property type="term" value="F:transferase activity"/>
    <property type="evidence" value="ECO:0007669"/>
    <property type="project" value="InterPro"/>
</dbReference>
<dbReference type="GO" id="GO:0002181">
    <property type="term" value="P:cytoplasmic translation"/>
    <property type="evidence" value="ECO:0007669"/>
    <property type="project" value="TreeGrafter"/>
</dbReference>
<dbReference type="FunFam" id="2.30.30.30:FF:000001">
    <property type="entry name" value="50S ribosomal protein L2"/>
    <property type="match status" value="1"/>
</dbReference>
<dbReference type="FunFam" id="2.40.50.140:FF:000003">
    <property type="entry name" value="50S ribosomal protein L2"/>
    <property type="match status" value="1"/>
</dbReference>
<dbReference type="FunFam" id="4.10.950.10:FF:000001">
    <property type="entry name" value="50S ribosomal protein L2"/>
    <property type="match status" value="1"/>
</dbReference>
<dbReference type="Gene3D" id="2.30.30.30">
    <property type="match status" value="1"/>
</dbReference>
<dbReference type="Gene3D" id="2.40.50.140">
    <property type="entry name" value="Nucleic acid-binding proteins"/>
    <property type="match status" value="1"/>
</dbReference>
<dbReference type="Gene3D" id="4.10.950.10">
    <property type="entry name" value="Ribosomal protein L2, domain 3"/>
    <property type="match status" value="1"/>
</dbReference>
<dbReference type="HAMAP" id="MF_01320_B">
    <property type="entry name" value="Ribosomal_uL2_B"/>
    <property type="match status" value="1"/>
</dbReference>
<dbReference type="InterPro" id="IPR012340">
    <property type="entry name" value="NA-bd_OB-fold"/>
</dbReference>
<dbReference type="InterPro" id="IPR014722">
    <property type="entry name" value="Rib_uL2_dom2"/>
</dbReference>
<dbReference type="InterPro" id="IPR002171">
    <property type="entry name" value="Ribosomal_uL2"/>
</dbReference>
<dbReference type="InterPro" id="IPR005880">
    <property type="entry name" value="Ribosomal_uL2_bac/org-type"/>
</dbReference>
<dbReference type="InterPro" id="IPR022669">
    <property type="entry name" value="Ribosomal_uL2_C"/>
</dbReference>
<dbReference type="InterPro" id="IPR022671">
    <property type="entry name" value="Ribosomal_uL2_CS"/>
</dbReference>
<dbReference type="InterPro" id="IPR014726">
    <property type="entry name" value="Ribosomal_uL2_dom3"/>
</dbReference>
<dbReference type="InterPro" id="IPR022666">
    <property type="entry name" value="Ribosomal_uL2_RNA-bd_dom"/>
</dbReference>
<dbReference type="InterPro" id="IPR008991">
    <property type="entry name" value="Translation_prot_SH3-like_sf"/>
</dbReference>
<dbReference type="NCBIfam" id="TIGR01171">
    <property type="entry name" value="rplB_bact"/>
    <property type="match status" value="1"/>
</dbReference>
<dbReference type="PANTHER" id="PTHR13691:SF5">
    <property type="entry name" value="LARGE RIBOSOMAL SUBUNIT PROTEIN UL2M"/>
    <property type="match status" value="1"/>
</dbReference>
<dbReference type="PANTHER" id="PTHR13691">
    <property type="entry name" value="RIBOSOMAL PROTEIN L2"/>
    <property type="match status" value="1"/>
</dbReference>
<dbReference type="Pfam" id="PF00181">
    <property type="entry name" value="Ribosomal_L2"/>
    <property type="match status" value="1"/>
</dbReference>
<dbReference type="Pfam" id="PF03947">
    <property type="entry name" value="Ribosomal_L2_C"/>
    <property type="match status" value="1"/>
</dbReference>
<dbReference type="PIRSF" id="PIRSF002158">
    <property type="entry name" value="Ribosomal_L2"/>
    <property type="match status" value="1"/>
</dbReference>
<dbReference type="SMART" id="SM01383">
    <property type="entry name" value="Ribosomal_L2"/>
    <property type="match status" value="1"/>
</dbReference>
<dbReference type="SMART" id="SM01382">
    <property type="entry name" value="Ribosomal_L2_C"/>
    <property type="match status" value="1"/>
</dbReference>
<dbReference type="SUPFAM" id="SSF50249">
    <property type="entry name" value="Nucleic acid-binding proteins"/>
    <property type="match status" value="1"/>
</dbReference>
<dbReference type="SUPFAM" id="SSF50104">
    <property type="entry name" value="Translation proteins SH3-like domain"/>
    <property type="match status" value="1"/>
</dbReference>
<dbReference type="PROSITE" id="PS00467">
    <property type="entry name" value="RIBOSOMAL_L2"/>
    <property type="match status" value="1"/>
</dbReference>
<reference key="1">
    <citation type="journal article" date="2007" name="PLoS ONE">
        <title>The complete genome sequence and analysis of the Epsilonproteobacterium Arcobacter butzleri.</title>
        <authorList>
            <person name="Miller W.G."/>
            <person name="Parker C.T."/>
            <person name="Rubenfield M."/>
            <person name="Mendz G.L."/>
            <person name="Woesten M.M.S.M."/>
            <person name="Ussery D.W."/>
            <person name="Stolz J.F."/>
            <person name="Binnewies T.T."/>
            <person name="Hallin P.F."/>
            <person name="Wang G."/>
            <person name="Malek J.A."/>
            <person name="Rogosin A."/>
            <person name="Stanker L.H."/>
            <person name="Mandrell R.E."/>
        </authorList>
    </citation>
    <scope>NUCLEOTIDE SEQUENCE [LARGE SCALE GENOMIC DNA]</scope>
    <source>
        <strain>RM4018</strain>
    </source>
</reference>